<reference key="1">
    <citation type="journal article" date="2006" name="BMC Genomics">
        <title>Complete genome sequence of Shigella flexneri 5b and comparison with Shigella flexneri 2a.</title>
        <authorList>
            <person name="Nie H."/>
            <person name="Yang F."/>
            <person name="Zhang X."/>
            <person name="Yang J."/>
            <person name="Chen L."/>
            <person name="Wang J."/>
            <person name="Xiong Z."/>
            <person name="Peng J."/>
            <person name="Sun L."/>
            <person name="Dong J."/>
            <person name="Xue Y."/>
            <person name="Xu X."/>
            <person name="Chen S."/>
            <person name="Yao Z."/>
            <person name="Shen Y."/>
            <person name="Jin Q."/>
        </authorList>
    </citation>
    <scope>NUCLEOTIDE SEQUENCE [LARGE SCALE GENOMIC DNA]</scope>
    <source>
        <strain>8401</strain>
    </source>
</reference>
<evidence type="ECO:0000255" key="1">
    <source>
        <dbReference type="HAMAP-Rule" id="MF_00519"/>
    </source>
</evidence>
<feature type="chain" id="PRO_0000312621" description="L-arabinose isomerase">
    <location>
        <begin position="1"/>
        <end position="500"/>
    </location>
</feature>
<feature type="binding site" evidence="1">
    <location>
        <position position="306"/>
    </location>
    <ligand>
        <name>Mn(2+)</name>
        <dbReference type="ChEBI" id="CHEBI:29035"/>
    </ligand>
</feature>
<feature type="binding site" evidence="1">
    <location>
        <position position="333"/>
    </location>
    <ligand>
        <name>Mn(2+)</name>
        <dbReference type="ChEBI" id="CHEBI:29035"/>
    </ligand>
</feature>
<feature type="binding site" evidence="1">
    <location>
        <position position="350"/>
    </location>
    <ligand>
        <name>Mn(2+)</name>
        <dbReference type="ChEBI" id="CHEBI:29035"/>
    </ligand>
</feature>
<feature type="binding site" evidence="1">
    <location>
        <position position="450"/>
    </location>
    <ligand>
        <name>Mn(2+)</name>
        <dbReference type="ChEBI" id="CHEBI:29035"/>
    </ligand>
</feature>
<name>ARAA_SHIF8</name>
<proteinExistence type="inferred from homology"/>
<gene>
    <name evidence="1" type="primary">araA</name>
    <name type="ordered locus">SFV_0054</name>
</gene>
<comment type="function">
    <text evidence="1">Catalyzes the conversion of L-arabinose to L-ribulose.</text>
</comment>
<comment type="catalytic activity">
    <reaction evidence="1">
        <text>beta-L-arabinopyranose = L-ribulose</text>
        <dbReference type="Rhea" id="RHEA:14821"/>
        <dbReference type="ChEBI" id="CHEBI:16880"/>
        <dbReference type="ChEBI" id="CHEBI:40886"/>
        <dbReference type="EC" id="5.3.1.4"/>
    </reaction>
</comment>
<comment type="cofactor">
    <cofactor evidence="1">
        <name>Mn(2+)</name>
        <dbReference type="ChEBI" id="CHEBI:29035"/>
    </cofactor>
    <text evidence="1">Binds 1 Mn(2+) ion per subunit.</text>
</comment>
<comment type="pathway">
    <text evidence="1">Carbohydrate degradation; L-arabinose degradation via L-ribulose; D-xylulose 5-phosphate from L-arabinose (bacterial route): step 1/3.</text>
</comment>
<comment type="subunit">
    <text evidence="1">Homohexamer.</text>
</comment>
<comment type="similarity">
    <text evidence="1">Belongs to the arabinose isomerase family.</text>
</comment>
<sequence length="500" mass="56069">MAIFDNYEVWFVIGSQHLYGPETLRQVTQHAEHVVNALNTEAKLPCKLVLKPLGTTPDEITAICRDANYDDRCAGLVVWLHTFSPAKMWINGLTMLNKPLLQFHTQFNAALPWDSIDMDFMNLNQTAHGGREFGFIGARMRQQHAVVTGHWQDKQAHERIGSWMRQAVSKQDTRHLKVCRFGDNMREVAVTDGDKVAAQIKFGFSVNTRAVGDLVQVVNSISDGDVNALVDEYESCYTMTPATQIHGEKRQNVLEAARIELGMKRFLEQGGFHAFTTTFEDLHGLKQLPGLPVQRLMQQGYGFAGEGDWKTAALLRIMKVMSTGLQGGTSFMEDYTYHFEKGNDLVLGSHMLEVCPSIAVEEKPILDVQHLGIGGKDDPARLIFNTQTGPAIVASLIDLGDRYRLLVNCIDTVKTPHSLPKLPVANALWKAQPDLPTASEAWILAGGAHHTVFSHALNLNDMRQFAEMHDIEITVIDNDTRLPAFKDALRWNEVYYGFRR</sequence>
<protein>
    <recommendedName>
        <fullName evidence="1">L-arabinose isomerase</fullName>
        <ecNumber evidence="1">5.3.1.4</ecNumber>
    </recommendedName>
</protein>
<organism>
    <name type="scientific">Shigella flexneri serotype 5b (strain 8401)</name>
    <dbReference type="NCBI Taxonomy" id="373384"/>
    <lineage>
        <taxon>Bacteria</taxon>
        <taxon>Pseudomonadati</taxon>
        <taxon>Pseudomonadota</taxon>
        <taxon>Gammaproteobacteria</taxon>
        <taxon>Enterobacterales</taxon>
        <taxon>Enterobacteriaceae</taxon>
        <taxon>Shigella</taxon>
    </lineage>
</organism>
<keyword id="KW-0054">Arabinose catabolism</keyword>
<keyword id="KW-0119">Carbohydrate metabolism</keyword>
<keyword id="KW-0413">Isomerase</keyword>
<keyword id="KW-0464">Manganese</keyword>
<keyword id="KW-0479">Metal-binding</keyword>
<accession>Q0T8D5</accession>
<dbReference type="EC" id="5.3.1.4" evidence="1"/>
<dbReference type="EMBL" id="CP000266">
    <property type="protein sequence ID" value="ABF02341.1"/>
    <property type="molecule type" value="Genomic_DNA"/>
</dbReference>
<dbReference type="RefSeq" id="WP_000963945.1">
    <property type="nucleotide sequence ID" value="NC_008258.1"/>
</dbReference>
<dbReference type="SMR" id="Q0T8D5"/>
<dbReference type="KEGG" id="sfv:SFV_0054"/>
<dbReference type="HOGENOM" id="CLU_045663_0_0_6"/>
<dbReference type="UniPathway" id="UPA00145">
    <property type="reaction ID" value="UER00565"/>
</dbReference>
<dbReference type="Proteomes" id="UP000000659">
    <property type="component" value="Chromosome"/>
</dbReference>
<dbReference type="GO" id="GO:0005829">
    <property type="term" value="C:cytosol"/>
    <property type="evidence" value="ECO:0007669"/>
    <property type="project" value="TreeGrafter"/>
</dbReference>
<dbReference type="GO" id="GO:0008733">
    <property type="term" value="F:L-arabinose isomerase activity"/>
    <property type="evidence" value="ECO:0007669"/>
    <property type="project" value="UniProtKB-UniRule"/>
</dbReference>
<dbReference type="GO" id="GO:0030145">
    <property type="term" value="F:manganese ion binding"/>
    <property type="evidence" value="ECO:0007669"/>
    <property type="project" value="UniProtKB-UniRule"/>
</dbReference>
<dbReference type="GO" id="GO:0019569">
    <property type="term" value="P:L-arabinose catabolic process to xylulose 5-phosphate"/>
    <property type="evidence" value="ECO:0007669"/>
    <property type="project" value="UniProtKB-UniRule"/>
</dbReference>
<dbReference type="CDD" id="cd03557">
    <property type="entry name" value="L-arabinose_isomerase"/>
    <property type="match status" value="1"/>
</dbReference>
<dbReference type="FunFam" id="3.40.50.10940:FF:000001">
    <property type="entry name" value="L-arabinose isomerase"/>
    <property type="match status" value="1"/>
</dbReference>
<dbReference type="Gene3D" id="3.40.50.10940">
    <property type="match status" value="1"/>
</dbReference>
<dbReference type="HAMAP" id="MF_00519">
    <property type="entry name" value="Arabinose_Isome"/>
    <property type="match status" value="1"/>
</dbReference>
<dbReference type="InterPro" id="IPR024664">
    <property type="entry name" value="Ara_Isoase_C"/>
</dbReference>
<dbReference type="InterPro" id="IPR055390">
    <property type="entry name" value="AraA_central"/>
</dbReference>
<dbReference type="InterPro" id="IPR055389">
    <property type="entry name" value="AraA_N"/>
</dbReference>
<dbReference type="InterPro" id="IPR038583">
    <property type="entry name" value="AraA_N_sf"/>
</dbReference>
<dbReference type="InterPro" id="IPR004216">
    <property type="entry name" value="Fuc/Ara_isomerase_C"/>
</dbReference>
<dbReference type="InterPro" id="IPR009015">
    <property type="entry name" value="Fucose_isomerase_N/cen_sf"/>
</dbReference>
<dbReference type="InterPro" id="IPR003762">
    <property type="entry name" value="Lara_isomerase"/>
</dbReference>
<dbReference type="NCBIfam" id="NF002795">
    <property type="entry name" value="PRK02929.1"/>
    <property type="match status" value="1"/>
</dbReference>
<dbReference type="PANTHER" id="PTHR38464">
    <property type="entry name" value="L-ARABINOSE ISOMERASE"/>
    <property type="match status" value="1"/>
</dbReference>
<dbReference type="PANTHER" id="PTHR38464:SF1">
    <property type="entry name" value="L-ARABINOSE ISOMERASE"/>
    <property type="match status" value="1"/>
</dbReference>
<dbReference type="Pfam" id="PF24856">
    <property type="entry name" value="AraA_central"/>
    <property type="match status" value="1"/>
</dbReference>
<dbReference type="Pfam" id="PF02610">
    <property type="entry name" value="AraA_N"/>
    <property type="match status" value="1"/>
</dbReference>
<dbReference type="Pfam" id="PF11762">
    <property type="entry name" value="Arabinose_Iso_C"/>
    <property type="match status" value="1"/>
</dbReference>
<dbReference type="PIRSF" id="PIRSF001478">
    <property type="entry name" value="L-ara_isomerase"/>
    <property type="match status" value="1"/>
</dbReference>
<dbReference type="SUPFAM" id="SSF50443">
    <property type="entry name" value="FucI/AraA C-terminal domain-like"/>
    <property type="match status" value="1"/>
</dbReference>
<dbReference type="SUPFAM" id="SSF53743">
    <property type="entry name" value="FucI/AraA N-terminal and middle domains"/>
    <property type="match status" value="1"/>
</dbReference>